<protein>
    <recommendedName>
        <fullName evidence="1">HMP-PP phosphatase</fullName>
        <ecNumber evidence="1">3.6.1.-</ecNumber>
    </recommendedName>
</protein>
<comment type="function">
    <text evidence="1">Catalyzes the hydrolysis of 4-amino-2-methyl-5-hydroxymethylpyrimidine pyrophosphate (HMP-PP) to 4-amino-2-methyl-5-hydroxymethylpyrimidine phosphate (HMP-P).</text>
</comment>
<comment type="catalytic activity">
    <reaction evidence="1">
        <text>4-amino-2-methyl-5-(diphosphooxymethyl)pyrimidine + H2O = 4-amino-2-methyl-5-(phosphooxymethyl)pyrimidine + phosphate + H(+)</text>
        <dbReference type="Rhea" id="RHEA:27914"/>
        <dbReference type="ChEBI" id="CHEBI:15377"/>
        <dbReference type="ChEBI" id="CHEBI:15378"/>
        <dbReference type="ChEBI" id="CHEBI:43474"/>
        <dbReference type="ChEBI" id="CHEBI:57841"/>
        <dbReference type="ChEBI" id="CHEBI:58354"/>
    </reaction>
</comment>
<comment type="cofactor">
    <cofactor evidence="1">
        <name>Mg(2+)</name>
        <dbReference type="ChEBI" id="CHEBI:18420"/>
    </cofactor>
</comment>
<comment type="similarity">
    <text evidence="1">Belongs to the HAD-like hydrolase superfamily. Cof family.</text>
</comment>
<proteinExistence type="inferred from homology"/>
<sequence length="272" mass="29883">MARLGAFDMDGTLLMPDHQLGEATQMALHRLHQRGVTLAFATGRHLLEMRQMLQKIALEAFLITGNGTRIHAPSGELLFAEDLSPQVAEAVLHGYWDTSASLHVFNDSGWLTDNDDPALLDAHAWSGFRYQLTDLKRLPAHQVTKICFVADHDALCELRVKLCQTLGSQAHICFSALDCLEVLPPGCNKGAALQALSQHLGITMADCMAFGDAMNDREMLSLAGKGLIMGNAMPQLLAELPHLPVIGHCSRQAVAHYLTHWLDHPHLDYSPE</sequence>
<keyword id="KW-0378">Hydrolase</keyword>
<keyword id="KW-0460">Magnesium</keyword>
<keyword id="KW-0479">Metal-binding</keyword>
<keyword id="KW-1185">Reference proteome</keyword>
<name>COF_CROS8</name>
<evidence type="ECO:0000255" key="1">
    <source>
        <dbReference type="HAMAP-Rule" id="MF_01847"/>
    </source>
</evidence>
<gene>
    <name evidence="1" type="primary">cof</name>
    <name type="ordered locus">ESA_02851</name>
</gene>
<accession>A7MFJ6</accession>
<feature type="chain" id="PRO_0000342975" description="HMP-PP phosphatase">
    <location>
        <begin position="1"/>
        <end position="272"/>
    </location>
</feature>
<feature type="active site" description="Nucleophile" evidence="1">
    <location>
        <position position="8"/>
    </location>
</feature>
<feature type="binding site" evidence="1">
    <location>
        <position position="8"/>
    </location>
    <ligand>
        <name>Mg(2+)</name>
        <dbReference type="ChEBI" id="CHEBI:18420"/>
    </ligand>
</feature>
<feature type="binding site" evidence="1">
    <location>
        <position position="10"/>
    </location>
    <ligand>
        <name>Mg(2+)</name>
        <dbReference type="ChEBI" id="CHEBI:18420"/>
    </ligand>
</feature>
<feature type="binding site" evidence="1">
    <location>
        <position position="212"/>
    </location>
    <ligand>
        <name>Mg(2+)</name>
        <dbReference type="ChEBI" id="CHEBI:18420"/>
    </ligand>
</feature>
<reference key="1">
    <citation type="journal article" date="2010" name="PLoS ONE">
        <title>Genome sequence of Cronobacter sakazakii BAA-894 and comparative genomic hybridization analysis with other Cronobacter species.</title>
        <authorList>
            <person name="Kucerova E."/>
            <person name="Clifton S.W."/>
            <person name="Xia X.Q."/>
            <person name="Long F."/>
            <person name="Porwollik S."/>
            <person name="Fulton L."/>
            <person name="Fronick C."/>
            <person name="Minx P."/>
            <person name="Kyung K."/>
            <person name="Warren W."/>
            <person name="Fulton R."/>
            <person name="Feng D."/>
            <person name="Wollam A."/>
            <person name="Shah N."/>
            <person name="Bhonagiri V."/>
            <person name="Nash W.E."/>
            <person name="Hallsworth-Pepin K."/>
            <person name="Wilson R.K."/>
            <person name="McClelland M."/>
            <person name="Forsythe S.J."/>
        </authorList>
    </citation>
    <scope>NUCLEOTIDE SEQUENCE [LARGE SCALE GENOMIC DNA]</scope>
    <source>
        <strain>ATCC BAA-894</strain>
    </source>
</reference>
<organism>
    <name type="scientific">Cronobacter sakazakii (strain ATCC BAA-894)</name>
    <name type="common">Enterobacter sakazakii</name>
    <dbReference type="NCBI Taxonomy" id="290339"/>
    <lineage>
        <taxon>Bacteria</taxon>
        <taxon>Pseudomonadati</taxon>
        <taxon>Pseudomonadota</taxon>
        <taxon>Gammaproteobacteria</taxon>
        <taxon>Enterobacterales</taxon>
        <taxon>Enterobacteriaceae</taxon>
        <taxon>Cronobacter</taxon>
    </lineage>
</organism>
<dbReference type="EC" id="3.6.1.-" evidence="1"/>
<dbReference type="EMBL" id="CP000783">
    <property type="protein sequence ID" value="ABU78080.1"/>
    <property type="molecule type" value="Genomic_DNA"/>
</dbReference>
<dbReference type="RefSeq" id="WP_012125483.1">
    <property type="nucleotide sequence ID" value="NC_009778.1"/>
</dbReference>
<dbReference type="SMR" id="A7MFJ6"/>
<dbReference type="KEGG" id="esa:ESA_02851"/>
<dbReference type="PATRIC" id="fig|290339.8.peg.2541"/>
<dbReference type="HOGENOM" id="CLU_044146_5_2_6"/>
<dbReference type="Proteomes" id="UP000000260">
    <property type="component" value="Chromosome"/>
</dbReference>
<dbReference type="GO" id="GO:0002145">
    <property type="term" value="F:4-amino-5-hydroxymethyl-2-methylpyrimidine diphosphatase activity"/>
    <property type="evidence" value="ECO:0007669"/>
    <property type="project" value="RHEA"/>
</dbReference>
<dbReference type="GO" id="GO:0000287">
    <property type="term" value="F:magnesium ion binding"/>
    <property type="evidence" value="ECO:0000250"/>
    <property type="project" value="UniProtKB"/>
</dbReference>
<dbReference type="GO" id="GO:0016791">
    <property type="term" value="F:phosphatase activity"/>
    <property type="evidence" value="ECO:0000250"/>
    <property type="project" value="UniProtKB"/>
</dbReference>
<dbReference type="CDD" id="cd07516">
    <property type="entry name" value="HAD_Pase"/>
    <property type="match status" value="1"/>
</dbReference>
<dbReference type="FunFam" id="3.30.1240.10:FF:000002">
    <property type="entry name" value="HMP-PP phosphatase"/>
    <property type="match status" value="1"/>
</dbReference>
<dbReference type="Gene3D" id="3.30.1240.10">
    <property type="match status" value="1"/>
</dbReference>
<dbReference type="Gene3D" id="3.40.50.1000">
    <property type="entry name" value="HAD superfamily/HAD-like"/>
    <property type="match status" value="1"/>
</dbReference>
<dbReference type="HAMAP" id="MF_01847">
    <property type="entry name" value="HMP_PP_phosphat"/>
    <property type="match status" value="1"/>
</dbReference>
<dbReference type="InterPro" id="IPR000150">
    <property type="entry name" value="Cof"/>
</dbReference>
<dbReference type="InterPro" id="IPR036412">
    <property type="entry name" value="HAD-like_sf"/>
</dbReference>
<dbReference type="InterPro" id="IPR006379">
    <property type="entry name" value="HAD-SF_hydro_IIB"/>
</dbReference>
<dbReference type="InterPro" id="IPR023214">
    <property type="entry name" value="HAD_sf"/>
</dbReference>
<dbReference type="InterPro" id="IPR023938">
    <property type="entry name" value="HMP-PP_phosphatase"/>
</dbReference>
<dbReference type="NCBIfam" id="TIGR00099">
    <property type="entry name" value="Cof-subfamily"/>
    <property type="match status" value="1"/>
</dbReference>
<dbReference type="NCBIfam" id="TIGR01484">
    <property type="entry name" value="HAD-SF-IIB"/>
    <property type="match status" value="1"/>
</dbReference>
<dbReference type="NCBIfam" id="NF011705">
    <property type="entry name" value="PRK15126.1"/>
    <property type="match status" value="1"/>
</dbReference>
<dbReference type="PANTHER" id="PTHR47267">
    <property type="match status" value="1"/>
</dbReference>
<dbReference type="PANTHER" id="PTHR47267:SF2">
    <property type="entry name" value="HMP-PP PHOSPHATASE"/>
    <property type="match status" value="1"/>
</dbReference>
<dbReference type="Pfam" id="PF08282">
    <property type="entry name" value="Hydrolase_3"/>
    <property type="match status" value="1"/>
</dbReference>
<dbReference type="SFLD" id="SFLDG01140">
    <property type="entry name" value="C2.B:_Phosphomannomutase_and_P"/>
    <property type="match status" value="1"/>
</dbReference>
<dbReference type="SFLD" id="SFLDS00003">
    <property type="entry name" value="Haloacid_Dehalogenase"/>
    <property type="match status" value="1"/>
</dbReference>
<dbReference type="SUPFAM" id="SSF56784">
    <property type="entry name" value="HAD-like"/>
    <property type="match status" value="1"/>
</dbReference>
<dbReference type="PROSITE" id="PS01229">
    <property type="entry name" value="COF_2"/>
    <property type="match status" value="1"/>
</dbReference>